<evidence type="ECO:0000250" key="1"/>
<evidence type="ECO:0000255" key="2"/>
<evidence type="ECO:0000255" key="3">
    <source>
        <dbReference type="PROSITE-ProRule" id="PRU00739"/>
    </source>
</evidence>
<evidence type="ECO:0000256" key="4">
    <source>
        <dbReference type="SAM" id="MobiDB-lite"/>
    </source>
</evidence>
<evidence type="ECO:0000269" key="5">
    <source>
    </source>
</evidence>
<evidence type="ECO:0000269" key="6">
    <source>
    </source>
</evidence>
<evidence type="ECO:0000303" key="7">
    <source>
    </source>
</evidence>
<evidence type="ECO:0000305" key="8"/>
<evidence type="ECO:0007829" key="9">
    <source>
        <dbReference type="PDB" id="6ZQX"/>
    </source>
</evidence>
<name>FBCD1_HUMAN</name>
<comment type="function">
    <text evidence="5 6">Acetyl group-binding receptor which shows a high-affinity and calcium-dependent binding to acetylated structures such as chitin, some N-acetylated carbohydrates, and amino acids, but not to their non-acetylated counterparts. Can facilitate the endocytosis of acetylated components.</text>
</comment>
<comment type="subunit">
    <text evidence="5 6">Homotetramer; disulfide-linked.</text>
</comment>
<comment type="interaction">
    <interactant intactId="EBI-10200808">
        <id>Q8N539</id>
    </interactant>
    <interactant intactId="EBI-3932027">
        <id>P21145</id>
        <label>MAL</label>
    </interactant>
    <organismsDiffer>false</organismsDiffer>
    <experiments>6</experiments>
</comment>
<comment type="subcellular location">
    <subcellularLocation>
        <location evidence="8">Membrane</location>
        <topology evidence="8">Single-pass type II membrane protein</topology>
    </subcellularLocation>
</comment>
<comment type="alternative products">
    <event type="alternative splicing"/>
    <isoform>
        <id>Q8N539-1</id>
        <name>1</name>
        <sequence type="displayed"/>
    </isoform>
    <isoform>
        <id>Q8N539-2</id>
        <name>2</name>
        <sequence type="described" ref="VSP_026618 VSP_026619 VSP_026620"/>
    </isoform>
</comment>
<comment type="tissue specificity">
    <text evidence="5">Expressed in the small and large intestinal epithelial cells with a highly polarized localization to the apical surface corresponding to the brush border and in the ducts of the salivary gland.</text>
</comment>
<protein>
    <recommendedName>
        <fullName>Fibrinogen C domain-containing protein 1</fullName>
    </recommendedName>
</protein>
<dbReference type="EMBL" id="AY358311">
    <property type="protein sequence ID" value="AAQ88678.1"/>
    <property type="molecule type" value="mRNA"/>
</dbReference>
<dbReference type="EMBL" id="AK027716">
    <property type="protein sequence ID" value="BAB55319.1"/>
    <property type="molecule type" value="mRNA"/>
</dbReference>
<dbReference type="EMBL" id="AL161733">
    <property type="status" value="NOT_ANNOTATED_CDS"/>
    <property type="molecule type" value="Genomic_DNA"/>
</dbReference>
<dbReference type="EMBL" id="BC032953">
    <property type="protein sequence ID" value="AAH32953.1"/>
    <property type="molecule type" value="mRNA"/>
</dbReference>
<dbReference type="CCDS" id="CCDS6937.1">
    <molecule id="Q8N539-1"/>
</dbReference>
<dbReference type="RefSeq" id="NP_001138578.1">
    <molecule id="Q8N539-1"/>
    <property type="nucleotide sequence ID" value="NM_001145106.2"/>
</dbReference>
<dbReference type="RefSeq" id="NP_116232.3">
    <molecule id="Q8N539-1"/>
    <property type="nucleotide sequence ID" value="NM_032843.4"/>
</dbReference>
<dbReference type="RefSeq" id="XP_047279945.1">
    <molecule id="Q8N539-1"/>
    <property type="nucleotide sequence ID" value="XM_047423989.1"/>
</dbReference>
<dbReference type="RefSeq" id="XP_054220027.1">
    <molecule id="Q8N539-1"/>
    <property type="nucleotide sequence ID" value="XM_054364052.1"/>
</dbReference>
<dbReference type="PDB" id="4M7F">
    <property type="method" value="X-ray"/>
    <property type="resolution" value="2.10 A"/>
    <property type="chains" value="A/B=236-461"/>
</dbReference>
<dbReference type="PDB" id="4M7H">
    <property type="method" value="X-ray"/>
    <property type="resolution" value="2.00 A"/>
    <property type="chains" value="A/B=236-461"/>
</dbReference>
<dbReference type="PDB" id="6ZQR">
    <property type="method" value="X-ray"/>
    <property type="resolution" value="1.93 A"/>
    <property type="chains" value="A/B=236-461"/>
</dbReference>
<dbReference type="PDB" id="6ZQX">
    <property type="method" value="X-ray"/>
    <property type="resolution" value="1.84 A"/>
    <property type="chains" value="A/B=236-461"/>
</dbReference>
<dbReference type="PDB" id="6ZQY">
    <property type="method" value="X-ray"/>
    <property type="resolution" value="1.85 A"/>
    <property type="chains" value="A/B=236-461"/>
</dbReference>
<dbReference type="PDB" id="6ZR0">
    <property type="method" value="X-ray"/>
    <property type="resolution" value="1.94 A"/>
    <property type="chains" value="A/B=236-461"/>
</dbReference>
<dbReference type="PDB" id="6ZR3">
    <property type="method" value="X-ray"/>
    <property type="resolution" value="1.97 A"/>
    <property type="chains" value="A/B=236-461"/>
</dbReference>
<dbReference type="PDB" id="6ZR4">
    <property type="method" value="X-ray"/>
    <property type="resolution" value="2.00 A"/>
    <property type="chains" value="A/B=236-461"/>
</dbReference>
<dbReference type="PDBsum" id="4M7F"/>
<dbReference type="PDBsum" id="4M7H"/>
<dbReference type="PDBsum" id="6ZQR"/>
<dbReference type="PDBsum" id="6ZQX"/>
<dbReference type="PDBsum" id="6ZQY"/>
<dbReference type="PDBsum" id="6ZR0"/>
<dbReference type="PDBsum" id="6ZR3"/>
<dbReference type="PDBsum" id="6ZR4"/>
<dbReference type="SMR" id="Q8N539"/>
<dbReference type="BioGRID" id="124363">
    <property type="interactions" value="15"/>
</dbReference>
<dbReference type="FunCoup" id="Q8N539">
    <property type="interactions" value="94"/>
</dbReference>
<dbReference type="IntAct" id="Q8N539">
    <property type="interactions" value="5"/>
</dbReference>
<dbReference type="STRING" id="9606.ENSP00000361413"/>
<dbReference type="ChEMBL" id="CHEMBL4523397"/>
<dbReference type="UniLectin" id="Q8N539"/>
<dbReference type="GlyCosmos" id="Q8N539">
    <property type="glycosylation" value="1 site, No reported glycans"/>
</dbReference>
<dbReference type="GlyGen" id="Q8N539">
    <property type="glycosylation" value="1 site"/>
</dbReference>
<dbReference type="iPTMnet" id="Q8N539"/>
<dbReference type="PhosphoSitePlus" id="Q8N539"/>
<dbReference type="BioMuta" id="FIBCD1"/>
<dbReference type="DMDM" id="152032456"/>
<dbReference type="jPOST" id="Q8N539"/>
<dbReference type="MassIVE" id="Q8N539"/>
<dbReference type="PaxDb" id="9606-ENSP00000361413"/>
<dbReference type="PeptideAtlas" id="Q8N539"/>
<dbReference type="ProteomicsDB" id="71998">
    <molecule id="Q8N539-1"/>
</dbReference>
<dbReference type="Antibodypedia" id="31542">
    <property type="antibodies" value="75 antibodies from 16 providers"/>
</dbReference>
<dbReference type="DNASU" id="84929"/>
<dbReference type="Ensembl" id="ENST00000372338.9">
    <molecule id="Q8N539-1"/>
    <property type="protein sequence ID" value="ENSP00000361413.4"/>
    <property type="gene ID" value="ENSG00000130720.13"/>
</dbReference>
<dbReference type="Ensembl" id="ENST00000448616.5">
    <molecule id="Q8N539-1"/>
    <property type="protein sequence ID" value="ENSP00000414501.1"/>
    <property type="gene ID" value="ENSG00000130720.13"/>
</dbReference>
<dbReference type="GeneID" id="84929"/>
<dbReference type="KEGG" id="hsa:84929"/>
<dbReference type="MANE-Select" id="ENST00000372338.9">
    <property type="protein sequence ID" value="ENSP00000361413.4"/>
    <property type="RefSeq nucleotide sequence ID" value="NM_032843.5"/>
    <property type="RefSeq protein sequence ID" value="NP_116232.3"/>
</dbReference>
<dbReference type="UCSC" id="uc004bzz.4">
    <molecule id="Q8N539-1"/>
    <property type="organism name" value="human"/>
</dbReference>
<dbReference type="AGR" id="HGNC:25922"/>
<dbReference type="CTD" id="84929"/>
<dbReference type="DisGeNET" id="84929"/>
<dbReference type="GeneCards" id="FIBCD1"/>
<dbReference type="HGNC" id="HGNC:25922">
    <property type="gene designation" value="FIBCD1"/>
</dbReference>
<dbReference type="HPA" id="ENSG00000130720">
    <property type="expression patterns" value="Group enriched (adrenal gland, brain, parathyroid gland, testis)"/>
</dbReference>
<dbReference type="MIM" id="613357">
    <property type="type" value="gene"/>
</dbReference>
<dbReference type="neXtProt" id="NX_Q8N539"/>
<dbReference type="OpenTargets" id="ENSG00000130720"/>
<dbReference type="PharmGKB" id="PA134891641"/>
<dbReference type="VEuPathDB" id="HostDB:ENSG00000130720"/>
<dbReference type="eggNOG" id="KOG2579">
    <property type="taxonomic scope" value="Eukaryota"/>
</dbReference>
<dbReference type="GeneTree" id="ENSGT00940000155976"/>
<dbReference type="HOGENOM" id="CLU_038628_5_1_1"/>
<dbReference type="InParanoid" id="Q8N539"/>
<dbReference type="OMA" id="MVNERWK"/>
<dbReference type="OrthoDB" id="9990035at2759"/>
<dbReference type="PAN-GO" id="Q8N539">
    <property type="GO annotations" value="4 GO annotations based on evolutionary models"/>
</dbReference>
<dbReference type="PhylomeDB" id="Q8N539"/>
<dbReference type="TreeFam" id="TF351983"/>
<dbReference type="PathwayCommons" id="Q8N539"/>
<dbReference type="SignaLink" id="Q8N539"/>
<dbReference type="BioGRID-ORCS" id="84929">
    <property type="hits" value="35 hits in 1142 CRISPR screens"/>
</dbReference>
<dbReference type="ChiTaRS" id="FIBCD1">
    <property type="organism name" value="human"/>
</dbReference>
<dbReference type="EvolutionaryTrace" id="Q8N539"/>
<dbReference type="GenomeRNAi" id="84929"/>
<dbReference type="Pharos" id="Q8N539">
    <property type="development level" value="Tbio"/>
</dbReference>
<dbReference type="PRO" id="PR:Q8N539"/>
<dbReference type="Proteomes" id="UP000005640">
    <property type="component" value="Chromosome 9"/>
</dbReference>
<dbReference type="RNAct" id="Q8N539">
    <property type="molecule type" value="protein"/>
</dbReference>
<dbReference type="Bgee" id="ENSG00000130720">
    <property type="expression patterns" value="Expressed in right adrenal gland cortex and 144 other cell types or tissues"/>
</dbReference>
<dbReference type="ExpressionAtlas" id="Q8N539">
    <property type="expression patterns" value="baseline and differential"/>
</dbReference>
<dbReference type="GO" id="GO:0062023">
    <property type="term" value="C:collagen-containing extracellular matrix"/>
    <property type="evidence" value="ECO:0000318"/>
    <property type="project" value="GO_Central"/>
</dbReference>
<dbReference type="GO" id="GO:0005615">
    <property type="term" value="C:extracellular space"/>
    <property type="evidence" value="ECO:0000318"/>
    <property type="project" value="GO_Central"/>
</dbReference>
<dbReference type="GO" id="GO:0016020">
    <property type="term" value="C:membrane"/>
    <property type="evidence" value="ECO:0000314"/>
    <property type="project" value="UniProtKB"/>
</dbReference>
<dbReference type="GO" id="GO:0008061">
    <property type="term" value="F:chitin binding"/>
    <property type="evidence" value="ECO:0000314"/>
    <property type="project" value="UniProtKB"/>
</dbReference>
<dbReference type="GO" id="GO:0046872">
    <property type="term" value="F:metal ion binding"/>
    <property type="evidence" value="ECO:0007669"/>
    <property type="project" value="UniProtKB-KW"/>
</dbReference>
<dbReference type="CDD" id="cd00087">
    <property type="entry name" value="FReD"/>
    <property type="match status" value="1"/>
</dbReference>
<dbReference type="FunFam" id="3.90.215.10:FF:000001">
    <property type="entry name" value="Tenascin isoform 1"/>
    <property type="match status" value="1"/>
</dbReference>
<dbReference type="Gene3D" id="3.90.215.10">
    <property type="entry name" value="Gamma Fibrinogen, chain A, domain 1"/>
    <property type="match status" value="1"/>
</dbReference>
<dbReference type="InterPro" id="IPR036056">
    <property type="entry name" value="Fibrinogen-like_C"/>
</dbReference>
<dbReference type="InterPro" id="IPR014716">
    <property type="entry name" value="Fibrinogen_a/b/g_C_1"/>
</dbReference>
<dbReference type="InterPro" id="IPR002181">
    <property type="entry name" value="Fibrinogen_a/b/g_C_dom"/>
</dbReference>
<dbReference type="InterPro" id="IPR050373">
    <property type="entry name" value="Fibrinogen_C-term_domain"/>
</dbReference>
<dbReference type="InterPro" id="IPR020837">
    <property type="entry name" value="Fibrinogen_CS"/>
</dbReference>
<dbReference type="NCBIfam" id="NF040941">
    <property type="entry name" value="GGGWT_bact"/>
    <property type="match status" value="1"/>
</dbReference>
<dbReference type="PANTHER" id="PTHR19143:SF45">
    <property type="entry name" value="FIBRINOGEN C DOMAIN-CONTAINING PROTEIN 1"/>
    <property type="match status" value="1"/>
</dbReference>
<dbReference type="PANTHER" id="PTHR19143">
    <property type="entry name" value="FIBRINOGEN/TENASCIN/ANGIOPOEITIN"/>
    <property type="match status" value="1"/>
</dbReference>
<dbReference type="Pfam" id="PF00147">
    <property type="entry name" value="Fibrinogen_C"/>
    <property type="match status" value="1"/>
</dbReference>
<dbReference type="SMART" id="SM00186">
    <property type="entry name" value="FBG"/>
    <property type="match status" value="1"/>
</dbReference>
<dbReference type="SUPFAM" id="SSF56496">
    <property type="entry name" value="Fibrinogen C-terminal domain-like"/>
    <property type="match status" value="1"/>
</dbReference>
<dbReference type="PROSITE" id="PS00514">
    <property type="entry name" value="FIBRINOGEN_C_1"/>
    <property type="match status" value="1"/>
</dbReference>
<dbReference type="PROSITE" id="PS51406">
    <property type="entry name" value="FIBRINOGEN_C_2"/>
    <property type="match status" value="1"/>
</dbReference>
<reference key="1">
    <citation type="journal article" date="2003" name="Genome Res.">
        <title>The secreted protein discovery initiative (SPDI), a large-scale effort to identify novel human secreted and transmembrane proteins: a bioinformatics assessment.</title>
        <authorList>
            <person name="Clark H.F."/>
            <person name="Gurney A.L."/>
            <person name="Abaya E."/>
            <person name="Baker K."/>
            <person name="Baldwin D.T."/>
            <person name="Brush J."/>
            <person name="Chen J."/>
            <person name="Chow B."/>
            <person name="Chui C."/>
            <person name="Crowley C."/>
            <person name="Currell B."/>
            <person name="Deuel B."/>
            <person name="Dowd P."/>
            <person name="Eaton D."/>
            <person name="Foster J.S."/>
            <person name="Grimaldi C."/>
            <person name="Gu Q."/>
            <person name="Hass P.E."/>
            <person name="Heldens S."/>
            <person name="Huang A."/>
            <person name="Kim H.S."/>
            <person name="Klimowski L."/>
            <person name="Jin Y."/>
            <person name="Johnson S."/>
            <person name="Lee J."/>
            <person name="Lewis L."/>
            <person name="Liao D."/>
            <person name="Mark M.R."/>
            <person name="Robbie E."/>
            <person name="Sanchez C."/>
            <person name="Schoenfeld J."/>
            <person name="Seshagiri S."/>
            <person name="Simmons L."/>
            <person name="Singh J."/>
            <person name="Smith V."/>
            <person name="Stinson J."/>
            <person name="Vagts A."/>
            <person name="Vandlen R.L."/>
            <person name="Watanabe C."/>
            <person name="Wieand D."/>
            <person name="Woods K."/>
            <person name="Xie M.-H."/>
            <person name="Yansura D.G."/>
            <person name="Yi S."/>
            <person name="Yu G."/>
            <person name="Yuan J."/>
            <person name="Zhang M."/>
            <person name="Zhang Z."/>
            <person name="Goddard A.D."/>
            <person name="Wood W.I."/>
            <person name="Godowski P.J."/>
            <person name="Gray A.M."/>
        </authorList>
    </citation>
    <scope>NUCLEOTIDE SEQUENCE [LARGE SCALE MRNA] (ISOFORM 1)</scope>
</reference>
<reference key="2">
    <citation type="journal article" date="2004" name="Nat. Genet.">
        <title>Complete sequencing and characterization of 21,243 full-length human cDNAs.</title>
        <authorList>
            <person name="Ota T."/>
            <person name="Suzuki Y."/>
            <person name="Nishikawa T."/>
            <person name="Otsuki T."/>
            <person name="Sugiyama T."/>
            <person name="Irie R."/>
            <person name="Wakamatsu A."/>
            <person name="Hayashi K."/>
            <person name="Sato H."/>
            <person name="Nagai K."/>
            <person name="Kimura K."/>
            <person name="Makita H."/>
            <person name="Sekine M."/>
            <person name="Obayashi M."/>
            <person name="Nishi T."/>
            <person name="Shibahara T."/>
            <person name="Tanaka T."/>
            <person name="Ishii S."/>
            <person name="Yamamoto J."/>
            <person name="Saito K."/>
            <person name="Kawai Y."/>
            <person name="Isono Y."/>
            <person name="Nakamura Y."/>
            <person name="Nagahari K."/>
            <person name="Murakami K."/>
            <person name="Yasuda T."/>
            <person name="Iwayanagi T."/>
            <person name="Wagatsuma M."/>
            <person name="Shiratori A."/>
            <person name="Sudo H."/>
            <person name="Hosoiri T."/>
            <person name="Kaku Y."/>
            <person name="Kodaira H."/>
            <person name="Kondo H."/>
            <person name="Sugawara M."/>
            <person name="Takahashi M."/>
            <person name="Kanda K."/>
            <person name="Yokoi T."/>
            <person name="Furuya T."/>
            <person name="Kikkawa E."/>
            <person name="Omura Y."/>
            <person name="Abe K."/>
            <person name="Kamihara K."/>
            <person name="Katsuta N."/>
            <person name="Sato K."/>
            <person name="Tanikawa M."/>
            <person name="Yamazaki M."/>
            <person name="Ninomiya K."/>
            <person name="Ishibashi T."/>
            <person name="Yamashita H."/>
            <person name="Murakawa K."/>
            <person name="Fujimori K."/>
            <person name="Tanai H."/>
            <person name="Kimata M."/>
            <person name="Watanabe M."/>
            <person name="Hiraoka S."/>
            <person name="Chiba Y."/>
            <person name="Ishida S."/>
            <person name="Ono Y."/>
            <person name="Takiguchi S."/>
            <person name="Watanabe S."/>
            <person name="Yosida M."/>
            <person name="Hotuta T."/>
            <person name="Kusano J."/>
            <person name="Kanehori K."/>
            <person name="Takahashi-Fujii A."/>
            <person name="Hara H."/>
            <person name="Tanase T.-O."/>
            <person name="Nomura Y."/>
            <person name="Togiya S."/>
            <person name="Komai F."/>
            <person name="Hara R."/>
            <person name="Takeuchi K."/>
            <person name="Arita M."/>
            <person name="Imose N."/>
            <person name="Musashino K."/>
            <person name="Yuuki H."/>
            <person name="Oshima A."/>
            <person name="Sasaki N."/>
            <person name="Aotsuka S."/>
            <person name="Yoshikawa Y."/>
            <person name="Matsunawa H."/>
            <person name="Ichihara T."/>
            <person name="Shiohata N."/>
            <person name="Sano S."/>
            <person name="Moriya S."/>
            <person name="Momiyama H."/>
            <person name="Satoh N."/>
            <person name="Takami S."/>
            <person name="Terashima Y."/>
            <person name="Suzuki O."/>
            <person name="Nakagawa S."/>
            <person name="Senoh A."/>
            <person name="Mizoguchi H."/>
            <person name="Goto Y."/>
            <person name="Shimizu F."/>
            <person name="Wakebe H."/>
            <person name="Hishigaki H."/>
            <person name="Watanabe T."/>
            <person name="Sugiyama A."/>
            <person name="Takemoto M."/>
            <person name="Kawakami B."/>
            <person name="Yamazaki M."/>
            <person name="Watanabe K."/>
            <person name="Kumagai A."/>
            <person name="Itakura S."/>
            <person name="Fukuzumi Y."/>
            <person name="Fujimori Y."/>
            <person name="Komiyama M."/>
            <person name="Tashiro H."/>
            <person name="Tanigami A."/>
            <person name="Fujiwara T."/>
            <person name="Ono T."/>
            <person name="Yamada K."/>
            <person name="Fujii Y."/>
            <person name="Ozaki K."/>
            <person name="Hirao M."/>
            <person name="Ohmori Y."/>
            <person name="Kawabata A."/>
            <person name="Hikiji T."/>
            <person name="Kobatake N."/>
            <person name="Inagaki H."/>
            <person name="Ikema Y."/>
            <person name="Okamoto S."/>
            <person name="Okitani R."/>
            <person name="Kawakami T."/>
            <person name="Noguchi S."/>
            <person name="Itoh T."/>
            <person name="Shigeta K."/>
            <person name="Senba T."/>
            <person name="Matsumura K."/>
            <person name="Nakajima Y."/>
            <person name="Mizuno T."/>
            <person name="Morinaga M."/>
            <person name="Sasaki M."/>
            <person name="Togashi T."/>
            <person name="Oyama M."/>
            <person name="Hata H."/>
            <person name="Watanabe M."/>
            <person name="Komatsu T."/>
            <person name="Mizushima-Sugano J."/>
            <person name="Satoh T."/>
            <person name="Shirai Y."/>
            <person name="Takahashi Y."/>
            <person name="Nakagawa K."/>
            <person name="Okumura K."/>
            <person name="Nagase T."/>
            <person name="Nomura N."/>
            <person name="Kikuchi H."/>
            <person name="Masuho Y."/>
            <person name="Yamashita R."/>
            <person name="Nakai K."/>
            <person name="Yada T."/>
            <person name="Nakamura Y."/>
            <person name="Ohara O."/>
            <person name="Isogai T."/>
            <person name="Sugano S."/>
        </authorList>
    </citation>
    <scope>NUCLEOTIDE SEQUENCE [LARGE SCALE MRNA] (ISOFORM 2)</scope>
</reference>
<reference key="3">
    <citation type="journal article" date="2004" name="Nature">
        <title>DNA sequence and analysis of human chromosome 9.</title>
        <authorList>
            <person name="Humphray S.J."/>
            <person name="Oliver K."/>
            <person name="Hunt A.R."/>
            <person name="Plumb R.W."/>
            <person name="Loveland J.E."/>
            <person name="Howe K.L."/>
            <person name="Andrews T.D."/>
            <person name="Searle S."/>
            <person name="Hunt S.E."/>
            <person name="Scott C.E."/>
            <person name="Jones M.C."/>
            <person name="Ainscough R."/>
            <person name="Almeida J.P."/>
            <person name="Ambrose K.D."/>
            <person name="Ashwell R.I.S."/>
            <person name="Babbage A.K."/>
            <person name="Babbage S."/>
            <person name="Bagguley C.L."/>
            <person name="Bailey J."/>
            <person name="Banerjee R."/>
            <person name="Barker D.J."/>
            <person name="Barlow K.F."/>
            <person name="Bates K."/>
            <person name="Beasley H."/>
            <person name="Beasley O."/>
            <person name="Bird C.P."/>
            <person name="Bray-Allen S."/>
            <person name="Brown A.J."/>
            <person name="Brown J.Y."/>
            <person name="Burford D."/>
            <person name="Burrill W."/>
            <person name="Burton J."/>
            <person name="Carder C."/>
            <person name="Carter N.P."/>
            <person name="Chapman J.C."/>
            <person name="Chen Y."/>
            <person name="Clarke G."/>
            <person name="Clark S.Y."/>
            <person name="Clee C.M."/>
            <person name="Clegg S."/>
            <person name="Collier R.E."/>
            <person name="Corby N."/>
            <person name="Crosier M."/>
            <person name="Cummings A.T."/>
            <person name="Davies J."/>
            <person name="Dhami P."/>
            <person name="Dunn M."/>
            <person name="Dutta I."/>
            <person name="Dyer L.W."/>
            <person name="Earthrowl M.E."/>
            <person name="Faulkner L."/>
            <person name="Fleming C.J."/>
            <person name="Frankish A."/>
            <person name="Frankland J.A."/>
            <person name="French L."/>
            <person name="Fricker D.G."/>
            <person name="Garner P."/>
            <person name="Garnett J."/>
            <person name="Ghori J."/>
            <person name="Gilbert J.G.R."/>
            <person name="Glison C."/>
            <person name="Grafham D.V."/>
            <person name="Gribble S."/>
            <person name="Griffiths C."/>
            <person name="Griffiths-Jones S."/>
            <person name="Grocock R."/>
            <person name="Guy J."/>
            <person name="Hall R.E."/>
            <person name="Hammond S."/>
            <person name="Harley J.L."/>
            <person name="Harrison E.S.I."/>
            <person name="Hart E.A."/>
            <person name="Heath P.D."/>
            <person name="Henderson C.D."/>
            <person name="Hopkins B.L."/>
            <person name="Howard P.J."/>
            <person name="Howden P.J."/>
            <person name="Huckle E."/>
            <person name="Johnson C."/>
            <person name="Johnson D."/>
            <person name="Joy A.A."/>
            <person name="Kay M."/>
            <person name="Keenan S."/>
            <person name="Kershaw J.K."/>
            <person name="Kimberley A.M."/>
            <person name="King A."/>
            <person name="Knights A."/>
            <person name="Laird G.K."/>
            <person name="Langford C."/>
            <person name="Lawlor S."/>
            <person name="Leongamornlert D.A."/>
            <person name="Leversha M."/>
            <person name="Lloyd C."/>
            <person name="Lloyd D.M."/>
            <person name="Lovell J."/>
            <person name="Martin S."/>
            <person name="Mashreghi-Mohammadi M."/>
            <person name="Matthews L."/>
            <person name="McLaren S."/>
            <person name="McLay K.E."/>
            <person name="McMurray A."/>
            <person name="Milne S."/>
            <person name="Nickerson T."/>
            <person name="Nisbett J."/>
            <person name="Nordsiek G."/>
            <person name="Pearce A.V."/>
            <person name="Peck A.I."/>
            <person name="Porter K.M."/>
            <person name="Pandian R."/>
            <person name="Pelan S."/>
            <person name="Phillimore B."/>
            <person name="Povey S."/>
            <person name="Ramsey Y."/>
            <person name="Rand V."/>
            <person name="Scharfe M."/>
            <person name="Sehra H.K."/>
            <person name="Shownkeen R."/>
            <person name="Sims S.K."/>
            <person name="Skuce C.D."/>
            <person name="Smith M."/>
            <person name="Steward C.A."/>
            <person name="Swarbreck D."/>
            <person name="Sycamore N."/>
            <person name="Tester J."/>
            <person name="Thorpe A."/>
            <person name="Tracey A."/>
            <person name="Tromans A."/>
            <person name="Thomas D.W."/>
            <person name="Wall M."/>
            <person name="Wallis J.M."/>
            <person name="West A.P."/>
            <person name="Whitehead S.L."/>
            <person name="Willey D.L."/>
            <person name="Williams S.A."/>
            <person name="Wilming L."/>
            <person name="Wray P.W."/>
            <person name="Young L."/>
            <person name="Ashurst J.L."/>
            <person name="Coulson A."/>
            <person name="Blocker H."/>
            <person name="Durbin R.M."/>
            <person name="Sulston J.E."/>
            <person name="Hubbard T."/>
            <person name="Jackson M.J."/>
            <person name="Bentley D.R."/>
            <person name="Beck S."/>
            <person name="Rogers J."/>
            <person name="Dunham I."/>
        </authorList>
    </citation>
    <scope>NUCLEOTIDE SEQUENCE [LARGE SCALE GENOMIC DNA]</scope>
</reference>
<reference key="4">
    <citation type="journal article" date="2004" name="Genome Res.">
        <title>The status, quality, and expansion of the NIH full-length cDNA project: the Mammalian Gene Collection (MGC).</title>
        <authorList>
            <consortium name="The MGC Project Team"/>
        </authorList>
    </citation>
    <scope>NUCLEOTIDE SEQUENCE [LARGE SCALE MRNA] (ISOFORM 1)</scope>
    <source>
        <tissue>Brain</tissue>
    </source>
</reference>
<reference key="5">
    <citation type="journal article" date="2009" name="J. Immunol.">
        <title>Characterization of FIBCD1 as an acetyl group-binding receptor that binds chitin.</title>
        <authorList>
            <person name="Schlosser A."/>
            <person name="Thomsen T."/>
            <person name="Moeller J.B."/>
            <person name="Nielsen O."/>
            <person name="Tornoee I."/>
            <person name="Mollenhauer J."/>
            <person name="Moestrup S.K."/>
            <person name="Holmskov U."/>
        </authorList>
    </citation>
    <scope>FUNCTION</scope>
    <scope>SUBUNIT</scope>
    <scope>SUBCELLULAR LOCATION</scope>
    <scope>TISSUE SPECIFICITY</scope>
</reference>
<reference key="6">
    <citation type="journal article" date="2010" name="J. Biol. Chem.">
        <title>The recognition unit of FIBCD1 organizes into a noncovalently linked tetrameric structure and uses a hydrophobic funnel (S1) for acetyl group recognition.</title>
        <authorList>
            <person name="Thomsen T."/>
            <person name="Moeller J.B."/>
            <person name="Schlosser A."/>
            <person name="Sorensen G.L."/>
            <person name="Moestrup S.K."/>
            <person name="Palaniyar N."/>
            <person name="Wallis R."/>
            <person name="Mollenhauer J."/>
            <person name="Holmskov U."/>
        </authorList>
    </citation>
    <scope>FUNCTION</scope>
    <scope>SUBUNIT</scope>
    <scope>IDENTIFICATION BY MASS SPECTROMETRY</scope>
    <scope>MUTAGENESIS OF ASP-393; ASP-395; TYR-405; HIS-415; TYR-431; ALA-432 AND TRP-443</scope>
</reference>
<keyword id="KW-0002">3D-structure</keyword>
<keyword id="KW-0025">Alternative splicing</keyword>
<keyword id="KW-0106">Calcium</keyword>
<keyword id="KW-0147">Chitin-binding</keyword>
<keyword id="KW-1015">Disulfide bond</keyword>
<keyword id="KW-0325">Glycoprotein</keyword>
<keyword id="KW-0472">Membrane</keyword>
<keyword id="KW-0479">Metal-binding</keyword>
<keyword id="KW-1267">Proteomics identification</keyword>
<keyword id="KW-1185">Reference proteome</keyword>
<keyword id="KW-0735">Signal-anchor</keyword>
<keyword id="KW-0812">Transmembrane</keyword>
<keyword id="KW-1133">Transmembrane helix</keyword>
<accession>Q8N539</accession>
<accession>A3KFK0</accession>
<accession>Q6UXK6</accession>
<accession>Q96SJ7</accession>
<organism>
    <name type="scientific">Homo sapiens</name>
    <name type="common">Human</name>
    <dbReference type="NCBI Taxonomy" id="9606"/>
    <lineage>
        <taxon>Eukaryota</taxon>
        <taxon>Metazoa</taxon>
        <taxon>Chordata</taxon>
        <taxon>Craniata</taxon>
        <taxon>Vertebrata</taxon>
        <taxon>Euteleostomi</taxon>
        <taxon>Mammalia</taxon>
        <taxon>Eutheria</taxon>
        <taxon>Euarchontoglires</taxon>
        <taxon>Primates</taxon>
        <taxon>Haplorrhini</taxon>
        <taxon>Catarrhini</taxon>
        <taxon>Hominidae</taxon>
        <taxon>Homo</taxon>
    </lineage>
</organism>
<gene>
    <name type="primary">FIBCD1</name>
    <name type="ORF">UNQ701/PRO1346</name>
</gene>
<proteinExistence type="evidence at protein level"/>
<feature type="chain" id="PRO_0000294315" description="Fibrinogen C domain-containing protein 1">
    <location>
        <begin position="1"/>
        <end position="461"/>
    </location>
</feature>
<feature type="topological domain" description="Cytoplasmic" evidence="2">
    <location>
        <begin position="1"/>
        <end position="33"/>
    </location>
</feature>
<feature type="transmembrane region" description="Helical; Signal-anchor for type II membrane protein" evidence="2">
    <location>
        <begin position="34"/>
        <end position="54"/>
    </location>
</feature>
<feature type="topological domain" description="Extracellular" evidence="2">
    <location>
        <begin position="55"/>
        <end position="461"/>
    </location>
</feature>
<feature type="domain" description="Fibrinogen C-terminal" evidence="3">
    <location>
        <begin position="235"/>
        <end position="458"/>
    </location>
</feature>
<feature type="region of interest" description="Disordered" evidence="4">
    <location>
        <begin position="1"/>
        <end position="24"/>
    </location>
</feature>
<feature type="region of interest" description="Disordered" evidence="4">
    <location>
        <begin position="214"/>
        <end position="238"/>
    </location>
</feature>
<feature type="compositionally biased region" description="Basic and acidic residues" evidence="4">
    <location>
        <begin position="15"/>
        <end position="24"/>
    </location>
</feature>
<feature type="binding site" evidence="1">
    <location>
        <position position="393"/>
    </location>
    <ligand>
        <name>Ca(2+)</name>
        <dbReference type="ChEBI" id="CHEBI:29108"/>
    </ligand>
</feature>
<feature type="binding site" evidence="1">
    <location>
        <position position="395"/>
    </location>
    <ligand>
        <name>Ca(2+)</name>
        <dbReference type="ChEBI" id="CHEBI:29108"/>
    </ligand>
</feature>
<feature type="site" description="Implicated in ligand binding">
    <location>
        <position position="405"/>
    </location>
</feature>
<feature type="site" description="Implicated in ligand binding">
    <location>
        <position position="415"/>
    </location>
</feature>
<feature type="site" description="Implicated in ligand binding">
    <location>
        <position position="431"/>
    </location>
</feature>
<feature type="site" description="Implicated in ligand binding">
    <location>
        <position position="432"/>
    </location>
</feature>
<feature type="glycosylation site" description="N-linked (GlcNAc...) asparagine" evidence="2">
    <location>
        <position position="340"/>
    </location>
</feature>
<feature type="disulfide bond" evidence="3">
    <location>
        <begin position="244"/>
        <end position="273"/>
    </location>
</feature>
<feature type="disulfide bond" evidence="3">
    <location>
        <begin position="401"/>
        <end position="414"/>
    </location>
</feature>
<feature type="splice variant" id="VSP_026618" description="In isoform 2." evidence="7">
    <location>
        <begin position="1"/>
        <end position="158"/>
    </location>
</feature>
<feature type="splice variant" id="VSP_026619" description="In isoform 2." evidence="7">
    <original>LKRIHALTTQAAYELHVDLEDFENGTAYARYGSFGVGLFSV</original>
    <variation>PLDRCTLSLALLVPVAPSPTPPHSFVNVLHPPVPGGPTLQ</variation>
    <location>
        <begin position="317"/>
        <end position="357"/>
    </location>
</feature>
<feature type="splice variant" id="VSP_026620" description="In isoform 2." evidence="7">
    <location>
        <begin position="358"/>
        <end position="461"/>
    </location>
</feature>
<feature type="mutagenesis site" description="Complete loss of binding to acetylated bovine serum albumin and reduced binding to chitin; when associated with A-395." evidence="6">
    <original>D</original>
    <variation>N</variation>
    <location>
        <position position="393"/>
    </location>
</feature>
<feature type="mutagenesis site" description="Complete loss of binding to acetylated bovine serum albumin and reduced binding to chitin; when associated with N-395." evidence="6">
    <original>D</original>
    <variation>A</variation>
    <location>
        <position position="395"/>
    </location>
</feature>
<feature type="mutagenesis site" description="Significantly reduced binding to acetylated bovine serum albumin and loss of binding to chitin; when associated with S-431." evidence="6">
    <original>Y</original>
    <variation>S</variation>
    <location>
        <position position="405"/>
    </location>
</feature>
<feature type="mutagenesis site" description="Complete loss of binding to acetylated bovine serum albumin and chitin." evidence="6">
    <original>H</original>
    <variation>G</variation>
    <location>
        <position position="415"/>
    </location>
</feature>
<feature type="mutagenesis site" description="Significantly reduced binding to acetylated bovine serum albumin and loss of binding to chitin; when associated with S-405." evidence="6">
    <original>Y</original>
    <variation>S</variation>
    <location>
        <position position="431"/>
    </location>
</feature>
<feature type="mutagenesis site" description="Complete loss of binding to acetylated bovine serum albumin and chitin." evidence="6">
    <original>A</original>
    <variation>V</variation>
    <location>
        <position position="432"/>
    </location>
</feature>
<feature type="mutagenesis site" description="Slight reduction in binding to acetylated bovine serum albumin and no effect on binding to chitin." evidence="6">
    <original>W</original>
    <variation>S</variation>
    <location>
        <position position="443"/>
    </location>
</feature>
<feature type="sequence conflict" description="In Ref. 4; AAH32953." evidence="8" ref="4">
    <original>L</original>
    <variation>V</variation>
    <location>
        <position position="79"/>
    </location>
</feature>
<feature type="helix" evidence="9">
    <location>
        <begin position="244"/>
        <end position="249"/>
    </location>
</feature>
<feature type="strand" evidence="9">
    <location>
        <begin position="256"/>
        <end position="260"/>
    </location>
</feature>
<feature type="strand" evidence="9">
    <location>
        <begin position="269"/>
        <end position="274"/>
    </location>
</feature>
<feature type="helix" evidence="9">
    <location>
        <begin position="277"/>
        <end position="279"/>
    </location>
</feature>
<feature type="strand" evidence="9">
    <location>
        <begin position="282"/>
        <end position="291"/>
    </location>
</feature>
<feature type="helix" evidence="9">
    <location>
        <begin position="299"/>
        <end position="304"/>
    </location>
</feature>
<feature type="strand" evidence="9">
    <location>
        <begin position="311"/>
        <end position="314"/>
    </location>
</feature>
<feature type="helix" evidence="9">
    <location>
        <begin position="317"/>
        <end position="324"/>
    </location>
</feature>
<feature type="strand" evidence="9">
    <location>
        <begin position="329"/>
        <end position="336"/>
    </location>
</feature>
<feature type="strand" evidence="9">
    <location>
        <begin position="342"/>
        <end position="353"/>
    </location>
</feature>
<feature type="turn" evidence="9">
    <location>
        <begin position="359"/>
        <end position="363"/>
    </location>
</feature>
<feature type="strand" evidence="9">
    <location>
        <begin position="366"/>
        <end position="375"/>
    </location>
</feature>
<feature type="helix" evidence="9">
    <location>
        <begin position="380"/>
        <end position="382"/>
    </location>
</feature>
<feature type="strand" evidence="9">
    <location>
        <begin position="395"/>
        <end position="399"/>
    </location>
</feature>
<feature type="helix" evidence="9">
    <location>
        <begin position="401"/>
        <end position="404"/>
    </location>
</feature>
<feature type="strand" evidence="9">
    <location>
        <begin position="412"/>
        <end position="414"/>
    </location>
</feature>
<feature type="strand" evidence="9">
    <location>
        <begin position="416"/>
        <end position="418"/>
    </location>
</feature>
<feature type="strand" evidence="9">
    <location>
        <begin position="429"/>
        <end position="432"/>
    </location>
</feature>
<feature type="strand" evidence="9">
    <location>
        <begin position="434"/>
        <end position="437"/>
    </location>
</feature>
<feature type="helix" evidence="9">
    <location>
        <begin position="438"/>
        <end position="441"/>
    </location>
</feature>
<feature type="strand" evidence="9">
    <location>
        <begin position="443"/>
        <end position="446"/>
    </location>
</feature>
<feature type="strand" evidence="9">
    <location>
        <begin position="448"/>
        <end position="456"/>
    </location>
</feature>
<sequence>MVNDRWKTMGGAAQLEDRPRDKPQRPSCGYVLCTVLLALAVLLAVAVTGAVLFLNHAHAPGTAPPPVVSTGAASANSALVTVERADSSHLSILIDPRCPDLTDSFARLESAQASVLQALTEHQAQPRLVGDQEQELLDTLADQLPRLLARASELQTECMGLRKGHGTLGQGLSALQSEQGRLIQLLSESQGHMAHLVNSVSDILDALQRDRGLGRPRNKADLQRAPARGTRPRGCATGSRPRDCLDVLLSGQQDDGVYSVFPTHYPAGFQVYCDMRTDGGGWTVFQRREDGSVNFFRGWDAYRDGFGRLTGEHWLGLKRIHALTTQAAYELHVDLEDFENGTAYARYGSFGVGLFSVDPEEDGYPLTVADYSGTAGDSLLKHSGMRFTTKDRDSDHSENNCAAFYRGAWWYRNCHTSNLNGQYLRGAHASYADGVEWSSWTGWQYSLKFSEMKIRPVREDR</sequence>